<evidence type="ECO:0000255" key="1">
    <source>
        <dbReference type="HAMAP-Rule" id="MF_00002"/>
    </source>
</evidence>
<reference key="1">
    <citation type="journal article" date="2006" name="Proc. Natl. Acad. Sci. U.S.A.">
        <title>Genomic analysis of the uncultivated marine crenarchaeote Cenarchaeum symbiosum.</title>
        <authorList>
            <person name="Hallam S.J."/>
            <person name="Konstantinidis K.T."/>
            <person name="Putnam N."/>
            <person name="Schleper C."/>
            <person name="Watanabe Y."/>
            <person name="Sugahara J."/>
            <person name="Preston C."/>
            <person name="de la Torre J."/>
            <person name="Richardson P.M."/>
            <person name="DeLong E.F."/>
        </authorList>
    </citation>
    <scope>NUCLEOTIDE SEQUENCE [LARGE SCALE GENOMIC DNA]</scope>
    <source>
        <strain>A</strain>
    </source>
</reference>
<proteinExistence type="inferred from homology"/>
<sequence>MRESELIVRRIREGTVIDHIDGGRGLQVLSALGIDGGDGSLITVALNVPSGKFSKKDIIKVENRFLKDDDTNRLALIAPSATVNIIRDYKLAEKRRVALPNEIGRIFRCTNPDCITNSSERIESVMDVASREGPVLKCRYCSRILDVSRMDYT</sequence>
<organism>
    <name type="scientific">Cenarchaeum symbiosum (strain A)</name>
    <dbReference type="NCBI Taxonomy" id="414004"/>
    <lineage>
        <taxon>Archaea</taxon>
        <taxon>Nitrososphaerota</taxon>
        <taxon>Candidatus Cenarchaeales</taxon>
        <taxon>Candidatus Cenarchaeaceae</taxon>
        <taxon>Candidatus Cenarchaeum</taxon>
    </lineage>
</organism>
<gene>
    <name evidence="1" type="primary">pyrI</name>
    <name type="ordered locus">CENSYa_1441</name>
</gene>
<protein>
    <recommendedName>
        <fullName evidence="1">Aspartate carbamoyltransferase regulatory chain</fullName>
    </recommendedName>
</protein>
<feature type="chain" id="PRO_0000321498" description="Aspartate carbamoyltransferase regulatory chain">
    <location>
        <begin position="1"/>
        <end position="153"/>
    </location>
</feature>
<feature type="binding site" evidence="1">
    <location>
        <position position="109"/>
    </location>
    <ligand>
        <name>Zn(2+)</name>
        <dbReference type="ChEBI" id="CHEBI:29105"/>
    </ligand>
</feature>
<feature type="binding site" evidence="1">
    <location>
        <position position="114"/>
    </location>
    <ligand>
        <name>Zn(2+)</name>
        <dbReference type="ChEBI" id="CHEBI:29105"/>
    </ligand>
</feature>
<feature type="binding site" evidence="1">
    <location>
        <position position="138"/>
    </location>
    <ligand>
        <name>Zn(2+)</name>
        <dbReference type="ChEBI" id="CHEBI:29105"/>
    </ligand>
</feature>
<feature type="binding site" evidence="1">
    <location>
        <position position="141"/>
    </location>
    <ligand>
        <name>Zn(2+)</name>
        <dbReference type="ChEBI" id="CHEBI:29105"/>
    </ligand>
</feature>
<accession>A0RXJ6</accession>
<comment type="function">
    <text evidence="1">Involved in allosteric regulation of aspartate carbamoyltransferase.</text>
</comment>
<comment type="cofactor">
    <cofactor evidence="1">
        <name>Zn(2+)</name>
        <dbReference type="ChEBI" id="CHEBI:29105"/>
    </cofactor>
    <text evidence="1">Binds 1 zinc ion per subunit.</text>
</comment>
<comment type="subunit">
    <text evidence="1">Contains catalytic and regulatory chains.</text>
</comment>
<comment type="similarity">
    <text evidence="1">Belongs to the PyrI family.</text>
</comment>
<keyword id="KW-0479">Metal-binding</keyword>
<keyword id="KW-0665">Pyrimidine biosynthesis</keyword>
<keyword id="KW-1185">Reference proteome</keyword>
<keyword id="KW-0862">Zinc</keyword>
<dbReference type="EMBL" id="DP000238">
    <property type="protein sequence ID" value="ABK78063.1"/>
    <property type="molecule type" value="Genomic_DNA"/>
</dbReference>
<dbReference type="SMR" id="A0RXJ6"/>
<dbReference type="STRING" id="414004.CENSYa_1441"/>
<dbReference type="EnsemblBacteria" id="ABK78063">
    <property type="protein sequence ID" value="ABK78063"/>
    <property type="gene ID" value="CENSYa_1441"/>
</dbReference>
<dbReference type="KEGG" id="csy:CENSYa_1441"/>
<dbReference type="PATRIC" id="fig|414004.10.peg.1325"/>
<dbReference type="HOGENOM" id="CLU_128576_0_0_2"/>
<dbReference type="Proteomes" id="UP000000758">
    <property type="component" value="Chromosome"/>
</dbReference>
<dbReference type="GO" id="GO:0009347">
    <property type="term" value="C:aspartate carbamoyltransferase complex"/>
    <property type="evidence" value="ECO:0007669"/>
    <property type="project" value="InterPro"/>
</dbReference>
<dbReference type="GO" id="GO:0046872">
    <property type="term" value="F:metal ion binding"/>
    <property type="evidence" value="ECO:0007669"/>
    <property type="project" value="UniProtKB-KW"/>
</dbReference>
<dbReference type="GO" id="GO:0006207">
    <property type="term" value="P:'de novo' pyrimidine nucleobase biosynthetic process"/>
    <property type="evidence" value="ECO:0007669"/>
    <property type="project" value="InterPro"/>
</dbReference>
<dbReference type="GO" id="GO:0006221">
    <property type="term" value="P:pyrimidine nucleotide biosynthetic process"/>
    <property type="evidence" value="ECO:0007669"/>
    <property type="project" value="UniProtKB-UniRule"/>
</dbReference>
<dbReference type="Gene3D" id="2.30.30.20">
    <property type="entry name" value="Aspartate carbamoyltransferase regulatory subunit, C-terminal domain"/>
    <property type="match status" value="1"/>
</dbReference>
<dbReference type="Gene3D" id="3.30.70.140">
    <property type="entry name" value="Aspartate carbamoyltransferase regulatory subunit, N-terminal domain"/>
    <property type="match status" value="1"/>
</dbReference>
<dbReference type="HAMAP" id="MF_00002">
    <property type="entry name" value="Asp_carb_tr_reg"/>
    <property type="match status" value="1"/>
</dbReference>
<dbReference type="InterPro" id="IPR020545">
    <property type="entry name" value="Asp_carbamoyltransf_reg_N"/>
</dbReference>
<dbReference type="InterPro" id="IPR002801">
    <property type="entry name" value="Asp_carbamoylTrfase_reg"/>
</dbReference>
<dbReference type="InterPro" id="IPR020542">
    <property type="entry name" value="Asp_carbamoyltrfase_reg_C"/>
</dbReference>
<dbReference type="InterPro" id="IPR036792">
    <property type="entry name" value="Asp_carbatrfase_reg_C_sf"/>
</dbReference>
<dbReference type="InterPro" id="IPR036793">
    <property type="entry name" value="Asp_carbatrfase_reg_N_sf"/>
</dbReference>
<dbReference type="NCBIfam" id="TIGR00240">
    <property type="entry name" value="ATCase_reg"/>
    <property type="match status" value="1"/>
</dbReference>
<dbReference type="PANTHER" id="PTHR35805">
    <property type="entry name" value="ASPARTATE CARBAMOYLTRANSFERASE REGULATORY CHAIN"/>
    <property type="match status" value="1"/>
</dbReference>
<dbReference type="PANTHER" id="PTHR35805:SF1">
    <property type="entry name" value="ASPARTATE CARBAMOYLTRANSFERASE REGULATORY CHAIN"/>
    <property type="match status" value="1"/>
</dbReference>
<dbReference type="Pfam" id="PF01948">
    <property type="entry name" value="PyrI"/>
    <property type="match status" value="1"/>
</dbReference>
<dbReference type="Pfam" id="PF02748">
    <property type="entry name" value="PyrI_C"/>
    <property type="match status" value="1"/>
</dbReference>
<dbReference type="SUPFAM" id="SSF57825">
    <property type="entry name" value="Aspartate carbamoyltransferase, Regulatory-chain, C-terminal domain"/>
    <property type="match status" value="1"/>
</dbReference>
<dbReference type="SUPFAM" id="SSF54893">
    <property type="entry name" value="Aspartate carbamoyltransferase, Regulatory-chain, N-terminal domain"/>
    <property type="match status" value="1"/>
</dbReference>
<name>PYRI_CENSY</name>